<accession>Q92BP8</accession>
<comment type="function">
    <text evidence="1">An essential GTPase that binds both GDP and GTP, with rapid nucleotide exchange. Plays a role in 16S rRNA processing and 30S ribosomal subunit biogenesis and possibly also in cell cycle regulation and energy metabolism.</text>
</comment>
<comment type="subunit">
    <text evidence="1">Monomer.</text>
</comment>
<comment type="subcellular location">
    <subcellularLocation>
        <location>Cytoplasm</location>
    </subcellularLocation>
    <subcellularLocation>
        <location evidence="1">Cell membrane</location>
        <topology evidence="1">Peripheral membrane protein</topology>
    </subcellularLocation>
</comment>
<comment type="similarity">
    <text evidence="1 2">Belongs to the TRAFAC class TrmE-Era-EngA-EngB-Septin-like GTPase superfamily. Era GTPase family.</text>
</comment>
<name>ERA_LISIN</name>
<feature type="chain" id="PRO_0000180024" description="GTPase Era">
    <location>
        <begin position="1"/>
        <end position="301"/>
    </location>
</feature>
<feature type="domain" description="Era-type G" evidence="2">
    <location>
        <begin position="6"/>
        <end position="173"/>
    </location>
</feature>
<feature type="domain" description="KH type-2" evidence="1">
    <location>
        <begin position="204"/>
        <end position="282"/>
    </location>
</feature>
<feature type="region of interest" description="G1" evidence="2">
    <location>
        <begin position="14"/>
        <end position="21"/>
    </location>
</feature>
<feature type="region of interest" description="G2" evidence="2">
    <location>
        <begin position="40"/>
        <end position="44"/>
    </location>
</feature>
<feature type="region of interest" description="G3" evidence="2">
    <location>
        <begin position="61"/>
        <end position="64"/>
    </location>
</feature>
<feature type="region of interest" description="G4" evidence="2">
    <location>
        <begin position="123"/>
        <end position="126"/>
    </location>
</feature>
<feature type="region of interest" description="G5" evidence="2">
    <location>
        <begin position="152"/>
        <end position="154"/>
    </location>
</feature>
<feature type="binding site" evidence="1">
    <location>
        <begin position="14"/>
        <end position="21"/>
    </location>
    <ligand>
        <name>GTP</name>
        <dbReference type="ChEBI" id="CHEBI:37565"/>
    </ligand>
</feature>
<feature type="binding site" evidence="1">
    <location>
        <begin position="61"/>
        <end position="65"/>
    </location>
    <ligand>
        <name>GTP</name>
        <dbReference type="ChEBI" id="CHEBI:37565"/>
    </ligand>
</feature>
<feature type="binding site" evidence="1">
    <location>
        <begin position="123"/>
        <end position="126"/>
    </location>
    <ligand>
        <name>GTP</name>
        <dbReference type="ChEBI" id="CHEBI:37565"/>
    </ligand>
</feature>
<reference key="1">
    <citation type="journal article" date="2001" name="Science">
        <title>Comparative genomics of Listeria species.</title>
        <authorList>
            <person name="Glaser P."/>
            <person name="Frangeul L."/>
            <person name="Buchrieser C."/>
            <person name="Rusniok C."/>
            <person name="Amend A."/>
            <person name="Baquero F."/>
            <person name="Berche P."/>
            <person name="Bloecker H."/>
            <person name="Brandt P."/>
            <person name="Chakraborty T."/>
            <person name="Charbit A."/>
            <person name="Chetouani F."/>
            <person name="Couve E."/>
            <person name="de Daruvar A."/>
            <person name="Dehoux P."/>
            <person name="Domann E."/>
            <person name="Dominguez-Bernal G."/>
            <person name="Duchaud E."/>
            <person name="Durant L."/>
            <person name="Dussurget O."/>
            <person name="Entian K.-D."/>
            <person name="Fsihi H."/>
            <person name="Garcia-del Portillo F."/>
            <person name="Garrido P."/>
            <person name="Gautier L."/>
            <person name="Goebel W."/>
            <person name="Gomez-Lopez N."/>
            <person name="Hain T."/>
            <person name="Hauf J."/>
            <person name="Jackson D."/>
            <person name="Jones L.-M."/>
            <person name="Kaerst U."/>
            <person name="Kreft J."/>
            <person name="Kuhn M."/>
            <person name="Kunst F."/>
            <person name="Kurapkat G."/>
            <person name="Madueno E."/>
            <person name="Maitournam A."/>
            <person name="Mata Vicente J."/>
            <person name="Ng E."/>
            <person name="Nedjari H."/>
            <person name="Nordsiek G."/>
            <person name="Novella S."/>
            <person name="de Pablos B."/>
            <person name="Perez-Diaz J.-C."/>
            <person name="Purcell R."/>
            <person name="Remmel B."/>
            <person name="Rose M."/>
            <person name="Schlueter T."/>
            <person name="Simoes N."/>
            <person name="Tierrez A."/>
            <person name="Vazquez-Boland J.-A."/>
            <person name="Voss H."/>
            <person name="Wehland J."/>
            <person name="Cossart P."/>
        </authorList>
    </citation>
    <scope>NUCLEOTIDE SEQUENCE [LARGE SCALE GENOMIC DNA]</scope>
    <source>
        <strain>ATCC BAA-680 / CLIP 11262</strain>
    </source>
</reference>
<organism>
    <name type="scientific">Listeria innocua serovar 6a (strain ATCC BAA-680 / CLIP 11262)</name>
    <dbReference type="NCBI Taxonomy" id="272626"/>
    <lineage>
        <taxon>Bacteria</taxon>
        <taxon>Bacillati</taxon>
        <taxon>Bacillota</taxon>
        <taxon>Bacilli</taxon>
        <taxon>Bacillales</taxon>
        <taxon>Listeriaceae</taxon>
        <taxon>Listeria</taxon>
    </lineage>
</organism>
<proteinExistence type="inferred from homology"/>
<evidence type="ECO:0000255" key="1">
    <source>
        <dbReference type="HAMAP-Rule" id="MF_00367"/>
    </source>
</evidence>
<evidence type="ECO:0000255" key="2">
    <source>
        <dbReference type="PROSITE-ProRule" id="PRU01050"/>
    </source>
</evidence>
<keyword id="KW-1003">Cell membrane</keyword>
<keyword id="KW-0963">Cytoplasm</keyword>
<keyword id="KW-0342">GTP-binding</keyword>
<keyword id="KW-0472">Membrane</keyword>
<keyword id="KW-0547">Nucleotide-binding</keyword>
<keyword id="KW-0690">Ribosome biogenesis</keyword>
<keyword id="KW-0694">RNA-binding</keyword>
<keyword id="KW-0699">rRNA-binding</keyword>
<gene>
    <name evidence="1" type="primary">era</name>
    <name type="ordered locus">lin1499</name>
</gene>
<protein>
    <recommendedName>
        <fullName evidence="1">GTPase Era</fullName>
    </recommendedName>
</protein>
<sequence length="301" mass="34458">MSEPFKSGFVAIVGRPNVGKSTLLNHIIGQKIAIMSDKAQTTRNKVQGVFTTDESQIIFIDTPGIHKPKHKLGDFMVKIALNTFQEVDLIYFVIDASTGFGRGDEFIIEKLKNVQTPVFLLINKIDLISPEDLIKLIEQYRELMDFEEIIPISALEGNNVPNLLEQTNANLEIGPMYYPKDQITDHPERFIISELIREQVLQLTREEVPHSVAVVIEGIEKNPKTEKLTINATIIVERSTQKGIIIGKQGQMLKQIGMRARKEIESLLGSKVFLEIWVKVQKNWRDKEHYLHDYGFDREEY</sequence>
<dbReference type="EMBL" id="AL596168">
    <property type="protein sequence ID" value="CAC96730.1"/>
    <property type="molecule type" value="Genomic_DNA"/>
</dbReference>
<dbReference type="PIR" id="AB1620">
    <property type="entry name" value="AB1620"/>
</dbReference>
<dbReference type="RefSeq" id="WP_003762292.1">
    <property type="nucleotide sequence ID" value="NC_003212.1"/>
</dbReference>
<dbReference type="SMR" id="Q92BP8"/>
<dbReference type="STRING" id="272626.gene:17565830"/>
<dbReference type="GeneID" id="93234880"/>
<dbReference type="KEGG" id="lin:lin1499"/>
<dbReference type="eggNOG" id="COG1159">
    <property type="taxonomic scope" value="Bacteria"/>
</dbReference>
<dbReference type="HOGENOM" id="CLU_038009_1_0_9"/>
<dbReference type="OrthoDB" id="9805918at2"/>
<dbReference type="Proteomes" id="UP000002513">
    <property type="component" value="Chromosome"/>
</dbReference>
<dbReference type="GO" id="GO:0005829">
    <property type="term" value="C:cytosol"/>
    <property type="evidence" value="ECO:0007669"/>
    <property type="project" value="TreeGrafter"/>
</dbReference>
<dbReference type="GO" id="GO:0005886">
    <property type="term" value="C:plasma membrane"/>
    <property type="evidence" value="ECO:0007669"/>
    <property type="project" value="UniProtKB-SubCell"/>
</dbReference>
<dbReference type="GO" id="GO:0005525">
    <property type="term" value="F:GTP binding"/>
    <property type="evidence" value="ECO:0007669"/>
    <property type="project" value="UniProtKB-UniRule"/>
</dbReference>
<dbReference type="GO" id="GO:0003924">
    <property type="term" value="F:GTPase activity"/>
    <property type="evidence" value="ECO:0007669"/>
    <property type="project" value="UniProtKB-UniRule"/>
</dbReference>
<dbReference type="GO" id="GO:0043024">
    <property type="term" value="F:ribosomal small subunit binding"/>
    <property type="evidence" value="ECO:0007669"/>
    <property type="project" value="TreeGrafter"/>
</dbReference>
<dbReference type="GO" id="GO:0070181">
    <property type="term" value="F:small ribosomal subunit rRNA binding"/>
    <property type="evidence" value="ECO:0007669"/>
    <property type="project" value="UniProtKB-UniRule"/>
</dbReference>
<dbReference type="GO" id="GO:0000028">
    <property type="term" value="P:ribosomal small subunit assembly"/>
    <property type="evidence" value="ECO:0007669"/>
    <property type="project" value="TreeGrafter"/>
</dbReference>
<dbReference type="CDD" id="cd04163">
    <property type="entry name" value="Era"/>
    <property type="match status" value="1"/>
</dbReference>
<dbReference type="CDD" id="cd22534">
    <property type="entry name" value="KH-II_Era"/>
    <property type="match status" value="1"/>
</dbReference>
<dbReference type="FunFam" id="3.30.300.20:FF:000003">
    <property type="entry name" value="GTPase Era"/>
    <property type="match status" value="1"/>
</dbReference>
<dbReference type="FunFam" id="3.40.50.300:FF:000094">
    <property type="entry name" value="GTPase Era"/>
    <property type="match status" value="1"/>
</dbReference>
<dbReference type="Gene3D" id="3.30.300.20">
    <property type="match status" value="1"/>
</dbReference>
<dbReference type="Gene3D" id="3.40.50.300">
    <property type="entry name" value="P-loop containing nucleotide triphosphate hydrolases"/>
    <property type="match status" value="1"/>
</dbReference>
<dbReference type="HAMAP" id="MF_00367">
    <property type="entry name" value="GTPase_Era"/>
    <property type="match status" value="1"/>
</dbReference>
<dbReference type="InterPro" id="IPR030388">
    <property type="entry name" value="G_ERA_dom"/>
</dbReference>
<dbReference type="InterPro" id="IPR006073">
    <property type="entry name" value="GTP-bd"/>
</dbReference>
<dbReference type="InterPro" id="IPR005662">
    <property type="entry name" value="GTPase_Era-like"/>
</dbReference>
<dbReference type="InterPro" id="IPR015946">
    <property type="entry name" value="KH_dom-like_a/b"/>
</dbReference>
<dbReference type="InterPro" id="IPR004044">
    <property type="entry name" value="KH_dom_type_2"/>
</dbReference>
<dbReference type="InterPro" id="IPR009019">
    <property type="entry name" value="KH_sf_prok-type"/>
</dbReference>
<dbReference type="InterPro" id="IPR027417">
    <property type="entry name" value="P-loop_NTPase"/>
</dbReference>
<dbReference type="InterPro" id="IPR005225">
    <property type="entry name" value="Small_GTP-bd"/>
</dbReference>
<dbReference type="NCBIfam" id="TIGR00436">
    <property type="entry name" value="era"/>
    <property type="match status" value="1"/>
</dbReference>
<dbReference type="NCBIfam" id="NF000908">
    <property type="entry name" value="PRK00089.1"/>
    <property type="match status" value="1"/>
</dbReference>
<dbReference type="NCBIfam" id="TIGR00231">
    <property type="entry name" value="small_GTP"/>
    <property type="match status" value="1"/>
</dbReference>
<dbReference type="PANTHER" id="PTHR42698">
    <property type="entry name" value="GTPASE ERA"/>
    <property type="match status" value="1"/>
</dbReference>
<dbReference type="PANTHER" id="PTHR42698:SF1">
    <property type="entry name" value="GTPASE ERA, MITOCHONDRIAL"/>
    <property type="match status" value="1"/>
</dbReference>
<dbReference type="Pfam" id="PF07650">
    <property type="entry name" value="KH_2"/>
    <property type="match status" value="1"/>
</dbReference>
<dbReference type="Pfam" id="PF01926">
    <property type="entry name" value="MMR_HSR1"/>
    <property type="match status" value="1"/>
</dbReference>
<dbReference type="PRINTS" id="PR00326">
    <property type="entry name" value="GTP1OBG"/>
</dbReference>
<dbReference type="SUPFAM" id="SSF52540">
    <property type="entry name" value="P-loop containing nucleoside triphosphate hydrolases"/>
    <property type="match status" value="1"/>
</dbReference>
<dbReference type="SUPFAM" id="SSF54814">
    <property type="entry name" value="Prokaryotic type KH domain (KH-domain type II)"/>
    <property type="match status" value="1"/>
</dbReference>
<dbReference type="PROSITE" id="PS51713">
    <property type="entry name" value="G_ERA"/>
    <property type="match status" value="1"/>
</dbReference>
<dbReference type="PROSITE" id="PS50823">
    <property type="entry name" value="KH_TYPE_2"/>
    <property type="match status" value="1"/>
</dbReference>